<proteinExistence type="inferred from homology"/>
<comment type="function">
    <text evidence="1">Catalyzes the formation of 4-diphosphocytidyl-2-C-methyl-D-erythritol from CTP and 2-C-methyl-D-erythritol 4-phosphate (MEP).</text>
</comment>
<comment type="catalytic activity">
    <reaction evidence="1">
        <text>2-C-methyl-D-erythritol 4-phosphate + CTP + H(+) = 4-CDP-2-C-methyl-D-erythritol + diphosphate</text>
        <dbReference type="Rhea" id="RHEA:13429"/>
        <dbReference type="ChEBI" id="CHEBI:15378"/>
        <dbReference type="ChEBI" id="CHEBI:33019"/>
        <dbReference type="ChEBI" id="CHEBI:37563"/>
        <dbReference type="ChEBI" id="CHEBI:57823"/>
        <dbReference type="ChEBI" id="CHEBI:58262"/>
        <dbReference type="EC" id="2.7.7.60"/>
    </reaction>
</comment>
<comment type="pathway">
    <text evidence="1">Isoprenoid biosynthesis; isopentenyl diphosphate biosynthesis via DXP pathway; isopentenyl diphosphate from 1-deoxy-D-xylulose 5-phosphate: step 2/6.</text>
</comment>
<comment type="subunit">
    <text evidence="1">Homodimer.</text>
</comment>
<comment type="similarity">
    <text evidence="1">Belongs to the IspD/TarI cytidylyltransferase family. IspD subfamily.</text>
</comment>
<protein>
    <recommendedName>
        <fullName evidence="1">2-C-methyl-D-erythritol 4-phosphate cytidylyltransferase</fullName>
        <ecNumber evidence="1">2.7.7.60</ecNumber>
    </recommendedName>
    <alternativeName>
        <fullName evidence="1">4-diphosphocytidyl-2C-methyl-D-erythritol synthase</fullName>
    </alternativeName>
    <alternativeName>
        <fullName evidence="1">MEP cytidylyltransferase</fullName>
        <shortName evidence="1">MCT</shortName>
    </alternativeName>
</protein>
<evidence type="ECO:0000255" key="1">
    <source>
        <dbReference type="HAMAP-Rule" id="MF_00108"/>
    </source>
</evidence>
<keyword id="KW-0414">Isoprene biosynthesis</keyword>
<keyword id="KW-0548">Nucleotidyltransferase</keyword>
<keyword id="KW-0808">Transferase</keyword>
<organism>
    <name type="scientific">Yersinia pseudotuberculosis serotype I (strain IP32953)</name>
    <dbReference type="NCBI Taxonomy" id="273123"/>
    <lineage>
        <taxon>Bacteria</taxon>
        <taxon>Pseudomonadati</taxon>
        <taxon>Pseudomonadota</taxon>
        <taxon>Gammaproteobacteria</taxon>
        <taxon>Enterobacterales</taxon>
        <taxon>Yersiniaceae</taxon>
        <taxon>Yersinia</taxon>
    </lineage>
</organism>
<name>ISPD_YERPS</name>
<reference key="1">
    <citation type="journal article" date="2004" name="Proc. Natl. Acad. Sci. U.S.A.">
        <title>Insights into the evolution of Yersinia pestis through whole-genome comparison with Yersinia pseudotuberculosis.</title>
        <authorList>
            <person name="Chain P.S.G."/>
            <person name="Carniel E."/>
            <person name="Larimer F.W."/>
            <person name="Lamerdin J."/>
            <person name="Stoutland P.O."/>
            <person name="Regala W.M."/>
            <person name="Georgescu A.M."/>
            <person name="Vergez L.M."/>
            <person name="Land M.L."/>
            <person name="Motin V.L."/>
            <person name="Brubaker R.R."/>
            <person name="Fowler J."/>
            <person name="Hinnebusch J."/>
            <person name="Marceau M."/>
            <person name="Medigue C."/>
            <person name="Simonet M."/>
            <person name="Chenal-Francisque V."/>
            <person name="Souza B."/>
            <person name="Dacheux D."/>
            <person name="Elliott J.M."/>
            <person name="Derbise A."/>
            <person name="Hauser L.J."/>
            <person name="Garcia E."/>
        </authorList>
    </citation>
    <scope>NUCLEOTIDE SEQUENCE [LARGE SCALE GENOMIC DNA]</scope>
    <source>
        <strain>IP32953</strain>
    </source>
</reference>
<dbReference type="EC" id="2.7.7.60" evidence="1"/>
<dbReference type="EMBL" id="BX936398">
    <property type="protein sequence ID" value="CAH20010.1"/>
    <property type="molecule type" value="Genomic_DNA"/>
</dbReference>
<dbReference type="RefSeq" id="WP_011191776.1">
    <property type="nucleotide sequence ID" value="NC_006155.1"/>
</dbReference>
<dbReference type="SMR" id="Q66EC3"/>
<dbReference type="KEGG" id="ypo:BZ17_1786"/>
<dbReference type="KEGG" id="yps:YPTB0770"/>
<dbReference type="PATRIC" id="fig|273123.14.peg.1891"/>
<dbReference type="UniPathway" id="UPA00056">
    <property type="reaction ID" value="UER00093"/>
</dbReference>
<dbReference type="Proteomes" id="UP000001011">
    <property type="component" value="Chromosome"/>
</dbReference>
<dbReference type="GO" id="GO:0050518">
    <property type="term" value="F:2-C-methyl-D-erythritol 4-phosphate cytidylyltransferase activity"/>
    <property type="evidence" value="ECO:0007669"/>
    <property type="project" value="UniProtKB-UniRule"/>
</dbReference>
<dbReference type="GO" id="GO:0019288">
    <property type="term" value="P:isopentenyl diphosphate biosynthetic process, methylerythritol 4-phosphate pathway"/>
    <property type="evidence" value="ECO:0007669"/>
    <property type="project" value="UniProtKB-UniRule"/>
</dbReference>
<dbReference type="CDD" id="cd02516">
    <property type="entry name" value="CDP-ME_synthetase"/>
    <property type="match status" value="1"/>
</dbReference>
<dbReference type="FunFam" id="3.90.550.10:FF:000003">
    <property type="entry name" value="2-C-methyl-D-erythritol 4-phosphate cytidylyltransferase"/>
    <property type="match status" value="1"/>
</dbReference>
<dbReference type="Gene3D" id="3.90.550.10">
    <property type="entry name" value="Spore Coat Polysaccharide Biosynthesis Protein SpsA, Chain A"/>
    <property type="match status" value="1"/>
</dbReference>
<dbReference type="HAMAP" id="MF_00108">
    <property type="entry name" value="IspD"/>
    <property type="match status" value="1"/>
</dbReference>
<dbReference type="InterPro" id="IPR001228">
    <property type="entry name" value="IspD"/>
</dbReference>
<dbReference type="InterPro" id="IPR034683">
    <property type="entry name" value="IspD/TarI"/>
</dbReference>
<dbReference type="InterPro" id="IPR050088">
    <property type="entry name" value="IspD/TarI_cytidylyltransf_bact"/>
</dbReference>
<dbReference type="InterPro" id="IPR018294">
    <property type="entry name" value="ISPD_synthase_CS"/>
</dbReference>
<dbReference type="InterPro" id="IPR029044">
    <property type="entry name" value="Nucleotide-diphossugar_trans"/>
</dbReference>
<dbReference type="NCBIfam" id="TIGR00453">
    <property type="entry name" value="ispD"/>
    <property type="match status" value="1"/>
</dbReference>
<dbReference type="PANTHER" id="PTHR32125">
    <property type="entry name" value="2-C-METHYL-D-ERYTHRITOL 4-PHOSPHATE CYTIDYLYLTRANSFERASE, CHLOROPLASTIC"/>
    <property type="match status" value="1"/>
</dbReference>
<dbReference type="PANTHER" id="PTHR32125:SF4">
    <property type="entry name" value="2-C-METHYL-D-ERYTHRITOL 4-PHOSPHATE CYTIDYLYLTRANSFERASE, CHLOROPLASTIC"/>
    <property type="match status" value="1"/>
</dbReference>
<dbReference type="Pfam" id="PF01128">
    <property type="entry name" value="IspD"/>
    <property type="match status" value="1"/>
</dbReference>
<dbReference type="SUPFAM" id="SSF53448">
    <property type="entry name" value="Nucleotide-diphospho-sugar transferases"/>
    <property type="match status" value="1"/>
</dbReference>
<dbReference type="PROSITE" id="PS01295">
    <property type="entry name" value="ISPD"/>
    <property type="match status" value="1"/>
</dbReference>
<gene>
    <name evidence="1" type="primary">ispD</name>
    <name type="ordered locus">YPTB0770</name>
</gene>
<feature type="chain" id="PRO_0000075654" description="2-C-methyl-D-erythritol 4-phosphate cytidylyltransferase">
    <location>
        <begin position="1"/>
        <end position="241"/>
    </location>
</feature>
<feature type="site" description="Transition state stabilizer" evidence="1">
    <location>
        <position position="23"/>
    </location>
</feature>
<feature type="site" description="Transition state stabilizer" evidence="1">
    <location>
        <position position="30"/>
    </location>
</feature>
<feature type="site" description="Positions MEP for the nucleophilic attack" evidence="1">
    <location>
        <position position="160"/>
    </location>
</feature>
<feature type="site" description="Positions MEP for the nucleophilic attack" evidence="1">
    <location>
        <position position="216"/>
    </location>
</feature>
<sequence>MSNFAVSLPEVIAVLPAAGIGSRMLADCPKQYLTVGGKTIIEHAIFSLLHHPRIQRVIVVIHPQDTQFSRLSVAQDPRISTVYGGDQRANSVMAGLQLAGQAEWVLVHDAARPCLHLDDLSRLLSITECSQVGGILAAPVRDTMKRAEPGIQAIAHTVDRQDLWHALTPQLFPLELLKLCLSRALREGVAVTDEASALEYCGYHPILVTGRSDNIKVTRPEDLALAEFYLTQRQSLNNDSL</sequence>
<accession>Q66EC3</accession>